<sequence>MTASIAQQKIRIRLKAFDRRMLDLSCDKIIQTADTTSASAIGPIPLPTKRKIYCVLRSPHVDKDSREHFETRTHRRIIDIYSPSAKTIDALMKLDLPSGVDIEVKL</sequence>
<protein>
    <recommendedName>
        <fullName evidence="1">Small ribosomal subunit protein uS10</fullName>
    </recommendedName>
    <alternativeName>
        <fullName evidence="2">30S ribosomal protein S10</fullName>
    </alternativeName>
</protein>
<name>RS10_PROM0</name>
<dbReference type="EMBL" id="CP000576">
    <property type="protein sequence ID" value="ABO18321.1"/>
    <property type="molecule type" value="Genomic_DNA"/>
</dbReference>
<dbReference type="RefSeq" id="WP_002807536.1">
    <property type="nucleotide sequence ID" value="NC_009091.1"/>
</dbReference>
<dbReference type="SMR" id="A3PEZ6"/>
<dbReference type="STRING" id="167546.P9301_16981"/>
<dbReference type="KEGG" id="pmg:P9301_16981"/>
<dbReference type="eggNOG" id="COG0051">
    <property type="taxonomic scope" value="Bacteria"/>
</dbReference>
<dbReference type="HOGENOM" id="CLU_122625_1_3_3"/>
<dbReference type="OrthoDB" id="9804464at2"/>
<dbReference type="Proteomes" id="UP000001430">
    <property type="component" value="Chromosome"/>
</dbReference>
<dbReference type="GO" id="GO:1990904">
    <property type="term" value="C:ribonucleoprotein complex"/>
    <property type="evidence" value="ECO:0007669"/>
    <property type="project" value="UniProtKB-KW"/>
</dbReference>
<dbReference type="GO" id="GO:0005840">
    <property type="term" value="C:ribosome"/>
    <property type="evidence" value="ECO:0007669"/>
    <property type="project" value="UniProtKB-KW"/>
</dbReference>
<dbReference type="GO" id="GO:0003735">
    <property type="term" value="F:structural constituent of ribosome"/>
    <property type="evidence" value="ECO:0007669"/>
    <property type="project" value="InterPro"/>
</dbReference>
<dbReference type="GO" id="GO:0000049">
    <property type="term" value="F:tRNA binding"/>
    <property type="evidence" value="ECO:0007669"/>
    <property type="project" value="UniProtKB-UniRule"/>
</dbReference>
<dbReference type="GO" id="GO:0006412">
    <property type="term" value="P:translation"/>
    <property type="evidence" value="ECO:0007669"/>
    <property type="project" value="UniProtKB-UniRule"/>
</dbReference>
<dbReference type="FunFam" id="3.30.70.600:FF:000001">
    <property type="entry name" value="30S ribosomal protein S10"/>
    <property type="match status" value="1"/>
</dbReference>
<dbReference type="Gene3D" id="3.30.70.600">
    <property type="entry name" value="Ribosomal protein S10 domain"/>
    <property type="match status" value="1"/>
</dbReference>
<dbReference type="HAMAP" id="MF_00508">
    <property type="entry name" value="Ribosomal_uS10"/>
    <property type="match status" value="1"/>
</dbReference>
<dbReference type="InterPro" id="IPR001848">
    <property type="entry name" value="Ribosomal_uS10"/>
</dbReference>
<dbReference type="InterPro" id="IPR018268">
    <property type="entry name" value="Ribosomal_uS10_CS"/>
</dbReference>
<dbReference type="InterPro" id="IPR027486">
    <property type="entry name" value="Ribosomal_uS10_dom"/>
</dbReference>
<dbReference type="InterPro" id="IPR036838">
    <property type="entry name" value="Ribosomal_uS10_dom_sf"/>
</dbReference>
<dbReference type="NCBIfam" id="NF001861">
    <property type="entry name" value="PRK00596.1"/>
    <property type="match status" value="1"/>
</dbReference>
<dbReference type="NCBIfam" id="TIGR01049">
    <property type="entry name" value="rpsJ_bact"/>
    <property type="match status" value="1"/>
</dbReference>
<dbReference type="PANTHER" id="PTHR11700">
    <property type="entry name" value="30S RIBOSOMAL PROTEIN S10 FAMILY MEMBER"/>
    <property type="match status" value="1"/>
</dbReference>
<dbReference type="Pfam" id="PF00338">
    <property type="entry name" value="Ribosomal_S10"/>
    <property type="match status" value="1"/>
</dbReference>
<dbReference type="PRINTS" id="PR00971">
    <property type="entry name" value="RIBOSOMALS10"/>
</dbReference>
<dbReference type="SMART" id="SM01403">
    <property type="entry name" value="Ribosomal_S10"/>
    <property type="match status" value="1"/>
</dbReference>
<dbReference type="SUPFAM" id="SSF54999">
    <property type="entry name" value="Ribosomal protein S10"/>
    <property type="match status" value="1"/>
</dbReference>
<dbReference type="PROSITE" id="PS00361">
    <property type="entry name" value="RIBOSOMAL_S10"/>
    <property type="match status" value="1"/>
</dbReference>
<reference key="1">
    <citation type="journal article" date="2007" name="PLoS Genet.">
        <title>Patterns and implications of gene gain and loss in the evolution of Prochlorococcus.</title>
        <authorList>
            <person name="Kettler G.C."/>
            <person name="Martiny A.C."/>
            <person name="Huang K."/>
            <person name="Zucker J."/>
            <person name="Coleman M.L."/>
            <person name="Rodrigue S."/>
            <person name="Chen F."/>
            <person name="Lapidus A."/>
            <person name="Ferriera S."/>
            <person name="Johnson J."/>
            <person name="Steglich C."/>
            <person name="Church G.M."/>
            <person name="Richardson P."/>
            <person name="Chisholm S.W."/>
        </authorList>
    </citation>
    <scope>NUCLEOTIDE SEQUENCE [LARGE SCALE GENOMIC DNA]</scope>
    <source>
        <strain>MIT 9301</strain>
    </source>
</reference>
<feature type="chain" id="PRO_1000015078" description="Small ribosomal subunit protein uS10">
    <location>
        <begin position="1"/>
        <end position="106"/>
    </location>
</feature>
<evidence type="ECO:0000255" key="1">
    <source>
        <dbReference type="HAMAP-Rule" id="MF_00508"/>
    </source>
</evidence>
<evidence type="ECO:0000305" key="2"/>
<keyword id="KW-1185">Reference proteome</keyword>
<keyword id="KW-0687">Ribonucleoprotein</keyword>
<keyword id="KW-0689">Ribosomal protein</keyword>
<proteinExistence type="inferred from homology"/>
<comment type="function">
    <text evidence="1">Involved in the binding of tRNA to the ribosomes.</text>
</comment>
<comment type="subunit">
    <text evidence="1">Part of the 30S ribosomal subunit.</text>
</comment>
<comment type="similarity">
    <text evidence="1">Belongs to the universal ribosomal protein uS10 family.</text>
</comment>
<organism>
    <name type="scientific">Prochlorococcus marinus (strain MIT 9301)</name>
    <dbReference type="NCBI Taxonomy" id="167546"/>
    <lineage>
        <taxon>Bacteria</taxon>
        <taxon>Bacillati</taxon>
        <taxon>Cyanobacteriota</taxon>
        <taxon>Cyanophyceae</taxon>
        <taxon>Synechococcales</taxon>
        <taxon>Prochlorococcaceae</taxon>
        <taxon>Prochlorococcus</taxon>
    </lineage>
</organism>
<gene>
    <name evidence="1" type="primary">rpsJ</name>
    <name evidence="1" type="synonym">rps10</name>
    <name type="ordered locus">P9301_16981</name>
</gene>
<accession>A3PEZ6</accession>